<protein>
    <recommendedName>
        <fullName>Putative triphosphatase YjbK</fullName>
        <ecNumber>3.6.1.-</ecNumber>
    </recommendedName>
</protein>
<reference key="1">
    <citation type="journal article" date="1997" name="Nature">
        <title>The complete genome sequence of the Gram-positive bacterium Bacillus subtilis.</title>
        <authorList>
            <person name="Kunst F."/>
            <person name="Ogasawara N."/>
            <person name="Moszer I."/>
            <person name="Albertini A.M."/>
            <person name="Alloni G."/>
            <person name="Azevedo V."/>
            <person name="Bertero M.G."/>
            <person name="Bessieres P."/>
            <person name="Bolotin A."/>
            <person name="Borchert S."/>
            <person name="Borriss R."/>
            <person name="Boursier L."/>
            <person name="Brans A."/>
            <person name="Braun M."/>
            <person name="Brignell S.C."/>
            <person name="Bron S."/>
            <person name="Brouillet S."/>
            <person name="Bruschi C.V."/>
            <person name="Caldwell B."/>
            <person name="Capuano V."/>
            <person name="Carter N.M."/>
            <person name="Choi S.-K."/>
            <person name="Codani J.-J."/>
            <person name="Connerton I.F."/>
            <person name="Cummings N.J."/>
            <person name="Daniel R.A."/>
            <person name="Denizot F."/>
            <person name="Devine K.M."/>
            <person name="Duesterhoeft A."/>
            <person name="Ehrlich S.D."/>
            <person name="Emmerson P.T."/>
            <person name="Entian K.-D."/>
            <person name="Errington J."/>
            <person name="Fabret C."/>
            <person name="Ferrari E."/>
            <person name="Foulger D."/>
            <person name="Fritz C."/>
            <person name="Fujita M."/>
            <person name="Fujita Y."/>
            <person name="Fuma S."/>
            <person name="Galizzi A."/>
            <person name="Galleron N."/>
            <person name="Ghim S.-Y."/>
            <person name="Glaser P."/>
            <person name="Goffeau A."/>
            <person name="Golightly E.J."/>
            <person name="Grandi G."/>
            <person name="Guiseppi G."/>
            <person name="Guy B.J."/>
            <person name="Haga K."/>
            <person name="Haiech J."/>
            <person name="Harwood C.R."/>
            <person name="Henaut A."/>
            <person name="Hilbert H."/>
            <person name="Holsappel S."/>
            <person name="Hosono S."/>
            <person name="Hullo M.-F."/>
            <person name="Itaya M."/>
            <person name="Jones L.-M."/>
            <person name="Joris B."/>
            <person name="Karamata D."/>
            <person name="Kasahara Y."/>
            <person name="Klaerr-Blanchard M."/>
            <person name="Klein C."/>
            <person name="Kobayashi Y."/>
            <person name="Koetter P."/>
            <person name="Koningstein G."/>
            <person name="Krogh S."/>
            <person name="Kumano M."/>
            <person name="Kurita K."/>
            <person name="Lapidus A."/>
            <person name="Lardinois S."/>
            <person name="Lauber J."/>
            <person name="Lazarevic V."/>
            <person name="Lee S.-M."/>
            <person name="Levine A."/>
            <person name="Liu H."/>
            <person name="Masuda S."/>
            <person name="Mauel C."/>
            <person name="Medigue C."/>
            <person name="Medina N."/>
            <person name="Mellado R.P."/>
            <person name="Mizuno M."/>
            <person name="Moestl D."/>
            <person name="Nakai S."/>
            <person name="Noback M."/>
            <person name="Noone D."/>
            <person name="O'Reilly M."/>
            <person name="Ogawa K."/>
            <person name="Ogiwara A."/>
            <person name="Oudega B."/>
            <person name="Park S.-H."/>
            <person name="Parro V."/>
            <person name="Pohl T.M."/>
            <person name="Portetelle D."/>
            <person name="Porwollik S."/>
            <person name="Prescott A.M."/>
            <person name="Presecan E."/>
            <person name="Pujic P."/>
            <person name="Purnelle B."/>
            <person name="Rapoport G."/>
            <person name="Rey M."/>
            <person name="Reynolds S."/>
            <person name="Rieger M."/>
            <person name="Rivolta C."/>
            <person name="Rocha E."/>
            <person name="Roche B."/>
            <person name="Rose M."/>
            <person name="Sadaie Y."/>
            <person name="Sato T."/>
            <person name="Scanlan E."/>
            <person name="Schleich S."/>
            <person name="Schroeter R."/>
            <person name="Scoffone F."/>
            <person name="Sekiguchi J."/>
            <person name="Sekowska A."/>
            <person name="Seror S.J."/>
            <person name="Serror P."/>
            <person name="Shin B.-S."/>
            <person name="Soldo B."/>
            <person name="Sorokin A."/>
            <person name="Tacconi E."/>
            <person name="Takagi T."/>
            <person name="Takahashi H."/>
            <person name="Takemaru K."/>
            <person name="Takeuchi M."/>
            <person name="Tamakoshi A."/>
            <person name="Tanaka T."/>
            <person name="Terpstra P."/>
            <person name="Tognoni A."/>
            <person name="Tosato V."/>
            <person name="Uchiyama S."/>
            <person name="Vandenbol M."/>
            <person name="Vannier F."/>
            <person name="Vassarotti A."/>
            <person name="Viari A."/>
            <person name="Wambutt R."/>
            <person name="Wedler E."/>
            <person name="Wedler H."/>
            <person name="Weitzenegger T."/>
            <person name="Winters P."/>
            <person name="Wipat A."/>
            <person name="Yamamoto H."/>
            <person name="Yamane K."/>
            <person name="Yasumoto K."/>
            <person name="Yata K."/>
            <person name="Yoshida K."/>
            <person name="Yoshikawa H.-F."/>
            <person name="Zumstein E."/>
            <person name="Yoshikawa H."/>
            <person name="Danchin A."/>
        </authorList>
    </citation>
    <scope>NUCLEOTIDE SEQUENCE [LARGE SCALE GENOMIC DNA]</scope>
    <source>
        <strain>168</strain>
    </source>
</reference>
<reference key="2">
    <citation type="journal article" date="2005" name="Protein Pept. Lett.">
        <title>Protein expression, crystallization and preliminary X-ray crystallographic studies of YjbK from Bacillus subtilis.</title>
        <authorList>
            <person name="Dai X.Y."/>
            <person name="Liu Y."/>
            <person name="Liang Y.H."/>
            <person name="Zheng X."/>
            <person name="Luo M."/>
            <person name="Li L."/>
            <person name="Su X.D."/>
        </authorList>
    </citation>
    <scope>CRYSTALLIZATION</scope>
</reference>
<sequence length="190" mass="22238">MSQEIEIEFKNMLTKQEFKNIASALQLTEKDFTDQKNHYFDTDSFALKQKHAALRIRRKNGKYVLTLKEPADVGLLETHQQLSEVSDLAGFSVPEGPVKDQLHKLQIDTDAIQYFGSLATNRAEKETEKGLIVLDHSRYLNKEDYEIEFEAADWHEGRQAFEKLLQQFSIPQRETKNKILRFYEEKRKSI</sequence>
<feature type="chain" id="PRO_0000360755" description="Putative triphosphatase YjbK">
    <location>
        <begin position="1"/>
        <end position="190"/>
    </location>
</feature>
<feature type="domain" description="CYTH" evidence="1">
    <location>
        <begin position="4"/>
        <end position="189"/>
    </location>
</feature>
<keyword id="KW-0378">Hydrolase</keyword>
<keyword id="KW-1185">Reference proteome</keyword>
<organism>
    <name type="scientific">Bacillus subtilis (strain 168)</name>
    <dbReference type="NCBI Taxonomy" id="224308"/>
    <lineage>
        <taxon>Bacteria</taxon>
        <taxon>Bacillati</taxon>
        <taxon>Bacillota</taxon>
        <taxon>Bacilli</taxon>
        <taxon>Bacillales</taxon>
        <taxon>Bacillaceae</taxon>
        <taxon>Bacillus</taxon>
    </lineage>
</organism>
<evidence type="ECO:0000255" key="1">
    <source>
        <dbReference type="PROSITE-ProRule" id="PRU01044"/>
    </source>
</evidence>
<accession>O31609</accession>
<proteinExistence type="evidence at protein level"/>
<gene>
    <name type="primary">yjbK</name>
    <name type="ordered locus">BSU11580</name>
</gene>
<dbReference type="EC" id="3.6.1.-"/>
<dbReference type="EMBL" id="AL009126">
    <property type="protein sequence ID" value="CAB13015.1"/>
    <property type="molecule type" value="Genomic_DNA"/>
</dbReference>
<dbReference type="PIR" id="C69844">
    <property type="entry name" value="C69844"/>
</dbReference>
<dbReference type="RefSeq" id="NP_389040.1">
    <property type="nucleotide sequence ID" value="NC_000964.3"/>
</dbReference>
<dbReference type="RefSeq" id="WP_003232924.1">
    <property type="nucleotide sequence ID" value="NZ_OZ025638.1"/>
</dbReference>
<dbReference type="FunCoup" id="O31609">
    <property type="interactions" value="9"/>
</dbReference>
<dbReference type="STRING" id="224308.BSU11580"/>
<dbReference type="jPOST" id="O31609"/>
<dbReference type="PaxDb" id="224308-BSU11580"/>
<dbReference type="EnsemblBacteria" id="CAB13015">
    <property type="protein sequence ID" value="CAB13015"/>
    <property type="gene ID" value="BSU_11580"/>
</dbReference>
<dbReference type="GeneID" id="936408"/>
<dbReference type="KEGG" id="bsu:BSU11580"/>
<dbReference type="PATRIC" id="fig|224308.179.peg.1247"/>
<dbReference type="eggNOG" id="COG4116">
    <property type="taxonomic scope" value="Bacteria"/>
</dbReference>
<dbReference type="InParanoid" id="O31609"/>
<dbReference type="OrthoDB" id="384378at2"/>
<dbReference type="PhylomeDB" id="O31609"/>
<dbReference type="BioCyc" id="BSUB:BSU11580-MONOMER"/>
<dbReference type="Proteomes" id="UP000001570">
    <property type="component" value="Chromosome"/>
</dbReference>
<dbReference type="GO" id="GO:0016787">
    <property type="term" value="F:hydrolase activity"/>
    <property type="evidence" value="ECO:0007669"/>
    <property type="project" value="UniProtKB-KW"/>
</dbReference>
<dbReference type="CDD" id="cd07762">
    <property type="entry name" value="CYTH-like_Pase_1"/>
    <property type="match status" value="1"/>
</dbReference>
<dbReference type="Gene3D" id="2.40.320.10">
    <property type="entry name" value="Hypothetical Protein Pfu-838710-001"/>
    <property type="match status" value="1"/>
</dbReference>
<dbReference type="InterPro" id="IPR033469">
    <property type="entry name" value="CYTH-like_dom_sf"/>
</dbReference>
<dbReference type="InterPro" id="IPR023577">
    <property type="entry name" value="CYTH_domain"/>
</dbReference>
<dbReference type="InterPro" id="IPR009195">
    <property type="entry name" value="Uncharacterised_YjbK"/>
</dbReference>
<dbReference type="Pfam" id="PF01928">
    <property type="entry name" value="CYTH"/>
    <property type="match status" value="1"/>
</dbReference>
<dbReference type="PIRSF" id="PIRSF012526">
    <property type="entry name" value="CYTH_UCP012526"/>
    <property type="match status" value="1"/>
</dbReference>
<dbReference type="SMART" id="SM01118">
    <property type="entry name" value="CYTH"/>
    <property type="match status" value="1"/>
</dbReference>
<dbReference type="SUPFAM" id="SSF55154">
    <property type="entry name" value="CYTH-like phosphatases"/>
    <property type="match status" value="1"/>
</dbReference>
<dbReference type="PROSITE" id="PS51707">
    <property type="entry name" value="CYTH"/>
    <property type="match status" value="1"/>
</dbReference>
<name>YJBK_BACSU</name>